<accession>Q56Y01</accession>
<accession>F4IKQ0</accession>
<accession>Q84RI9</accession>
<proteinExistence type="evidence at transcript level"/>
<evidence type="ECO:0000250" key="1"/>
<evidence type="ECO:0000255" key="2"/>
<evidence type="ECO:0000256" key="3">
    <source>
        <dbReference type="SAM" id="MobiDB-lite"/>
    </source>
</evidence>
<evidence type="ECO:0000269" key="4">
    <source>
    </source>
</evidence>
<evidence type="ECO:0000303" key="5">
    <source>
    </source>
</evidence>
<evidence type="ECO:0000303" key="6">
    <source>
    </source>
</evidence>
<evidence type="ECO:0000305" key="7"/>
<reference key="1">
    <citation type="journal article" date="1999" name="Nature">
        <title>Sequence and analysis of chromosome 2 of the plant Arabidopsis thaliana.</title>
        <authorList>
            <person name="Lin X."/>
            <person name="Kaul S."/>
            <person name="Rounsley S.D."/>
            <person name="Shea T.P."/>
            <person name="Benito M.-I."/>
            <person name="Town C.D."/>
            <person name="Fujii C.Y."/>
            <person name="Mason T.M."/>
            <person name="Bowman C.L."/>
            <person name="Barnstead M.E."/>
            <person name="Feldblyum T.V."/>
            <person name="Buell C.R."/>
            <person name="Ketchum K.A."/>
            <person name="Lee J.J."/>
            <person name="Ronning C.M."/>
            <person name="Koo H.L."/>
            <person name="Moffat K.S."/>
            <person name="Cronin L.A."/>
            <person name="Shen M."/>
            <person name="Pai G."/>
            <person name="Van Aken S."/>
            <person name="Umayam L."/>
            <person name="Tallon L.J."/>
            <person name="Gill J.E."/>
            <person name="Adams M.D."/>
            <person name="Carrera A.J."/>
            <person name="Creasy T.H."/>
            <person name="Goodman H.M."/>
            <person name="Somerville C.R."/>
            <person name="Copenhaver G.P."/>
            <person name="Preuss D."/>
            <person name="Nierman W.C."/>
            <person name="White O."/>
            <person name="Eisen J.A."/>
            <person name="Salzberg S.L."/>
            <person name="Fraser C.M."/>
            <person name="Venter J.C."/>
        </authorList>
    </citation>
    <scope>NUCLEOTIDE SEQUENCE [LARGE SCALE GENOMIC DNA]</scope>
    <source>
        <strain>cv. Columbia</strain>
    </source>
</reference>
<reference key="2">
    <citation type="journal article" date="2017" name="Plant J.">
        <title>Araport11: a complete reannotation of the Arabidopsis thaliana reference genome.</title>
        <authorList>
            <person name="Cheng C.Y."/>
            <person name="Krishnakumar V."/>
            <person name="Chan A.P."/>
            <person name="Thibaud-Nissen F."/>
            <person name="Schobel S."/>
            <person name="Town C.D."/>
        </authorList>
    </citation>
    <scope>GENOME REANNOTATION</scope>
    <source>
        <strain>cv. Columbia</strain>
    </source>
</reference>
<reference key="3">
    <citation type="journal article" date="2002" name="Plant Physiol.">
        <title>Cloning and sequencing of cDNAs for hypothetical genes from chromosome 2 of Arabidopsis.</title>
        <authorList>
            <person name="Xiao Y.-L."/>
            <person name="Malik M."/>
            <person name="Whitelaw C.A."/>
            <person name="Town C.D."/>
        </authorList>
    </citation>
    <scope>NUCLEOTIDE SEQUENCE [LARGE SCALE MRNA] (ISOFORM 3)</scope>
    <source>
        <strain>cv. Columbia</strain>
    </source>
</reference>
<reference key="4">
    <citation type="journal article" date="2004" name="Genome Res.">
        <title>Whole genome sequence comparisons and 'full-length' cDNA sequences: a combined approach to evaluate and improve Arabidopsis genome annotation.</title>
        <authorList>
            <person name="Castelli V."/>
            <person name="Aury J.-M."/>
            <person name="Jaillon O."/>
            <person name="Wincker P."/>
            <person name="Clepet C."/>
            <person name="Menard M."/>
            <person name="Cruaud C."/>
            <person name="Quetier F."/>
            <person name="Scarpelli C."/>
            <person name="Schaechter V."/>
            <person name="Temple G."/>
            <person name="Caboche M."/>
            <person name="Weissenbach J."/>
            <person name="Salanoubat M."/>
        </authorList>
    </citation>
    <scope>NUCLEOTIDE SEQUENCE [LARGE SCALE MRNA] (ISOFORM 2)</scope>
    <source>
        <strain>cv. Columbia</strain>
    </source>
</reference>
<reference key="5">
    <citation type="submission" date="2005-03" db="EMBL/GenBank/DDBJ databases">
        <title>Large-scale analysis of RIKEN Arabidopsis full-length (RAFL) cDNAs.</title>
        <authorList>
            <person name="Totoki Y."/>
            <person name="Seki M."/>
            <person name="Ishida J."/>
            <person name="Nakajima M."/>
            <person name="Enju A."/>
            <person name="Kamiya A."/>
            <person name="Narusaka M."/>
            <person name="Shin-i T."/>
            <person name="Nakagawa M."/>
            <person name="Sakamoto N."/>
            <person name="Oishi K."/>
            <person name="Kohara Y."/>
            <person name="Kobayashi M."/>
            <person name="Toyoda A."/>
            <person name="Sakaki Y."/>
            <person name="Sakurai T."/>
            <person name="Iida K."/>
            <person name="Akiyama K."/>
            <person name="Satou M."/>
            <person name="Toyoda T."/>
            <person name="Konagaya A."/>
            <person name="Carninci P."/>
            <person name="Kawai J."/>
            <person name="Hayashizaki Y."/>
            <person name="Shinozaki K."/>
        </authorList>
    </citation>
    <scope>NUCLEOTIDE SEQUENCE [LARGE SCALE MRNA] (ISOFORM 1)</scope>
    <source>
        <strain>cv. Columbia</strain>
    </source>
</reference>
<reference key="6">
    <citation type="journal article" date="2010" name="Plant Mol. Biol.">
        <title>Functional analyses of differentially expressed isoforms of the Arabidopsis inositol phosphorylceramide synthase.</title>
        <authorList>
            <person name="Mina J.G."/>
            <person name="Okada Y."/>
            <person name="Wansadhipathi-Kannangara N.K."/>
            <person name="Pratt S."/>
            <person name="Shams-Eldin H."/>
            <person name="Schwarz R.T."/>
            <person name="Steel P.G."/>
            <person name="Fawcett T."/>
            <person name="Denny P.W."/>
        </authorList>
    </citation>
    <scope>FUNCTION</scope>
    <scope>TISSUE SPECIFICITY</scope>
    <scope>GENE FAMILY</scope>
    <scope>NOMENCLATURE</scope>
</reference>
<dbReference type="EC" id="2.7.8.-"/>
<dbReference type="EMBL" id="AC004561">
    <property type="status" value="NOT_ANNOTATED_CDS"/>
    <property type="molecule type" value="Genomic_DNA"/>
</dbReference>
<dbReference type="EMBL" id="CP002685">
    <property type="protein sequence ID" value="AEC08263.1"/>
    <property type="molecule type" value="Genomic_DNA"/>
</dbReference>
<dbReference type="EMBL" id="CP002685">
    <property type="protein sequence ID" value="AEC08264.1"/>
    <property type="molecule type" value="Genomic_DNA"/>
</dbReference>
<dbReference type="EMBL" id="CP002685">
    <property type="protein sequence ID" value="AEC08265.1"/>
    <property type="molecule type" value="Genomic_DNA"/>
</dbReference>
<dbReference type="EMBL" id="CP002685">
    <property type="protein sequence ID" value="ANM62493.1"/>
    <property type="molecule type" value="Genomic_DNA"/>
</dbReference>
<dbReference type="EMBL" id="AY231431">
    <property type="protein sequence ID" value="AAO86859.1"/>
    <property type="molecule type" value="mRNA"/>
</dbReference>
<dbReference type="EMBL" id="BX820662">
    <property type="status" value="NOT_ANNOTATED_CDS"/>
    <property type="molecule type" value="mRNA"/>
</dbReference>
<dbReference type="EMBL" id="AK221522">
    <property type="protein sequence ID" value="BAD94812.1"/>
    <property type="molecule type" value="mRNA"/>
</dbReference>
<dbReference type="RefSeq" id="NP_001189633.1">
    <molecule id="Q56Y01-1"/>
    <property type="nucleotide sequence ID" value="NM_001202704.1"/>
</dbReference>
<dbReference type="RefSeq" id="NP_001318312.1">
    <molecule id="Q56Y01-1"/>
    <property type="nucleotide sequence ID" value="NM_001336212.1"/>
</dbReference>
<dbReference type="RefSeq" id="NP_850134.2">
    <molecule id="Q56Y01-1"/>
    <property type="nucleotide sequence ID" value="NM_179803.4"/>
</dbReference>
<dbReference type="RefSeq" id="NP_973560.1">
    <molecule id="Q56Y01-2"/>
    <property type="nucleotide sequence ID" value="NM_201831.2"/>
</dbReference>
<dbReference type="FunCoup" id="Q56Y01">
    <property type="interactions" value="100"/>
</dbReference>
<dbReference type="STRING" id="3702.Q56Y01"/>
<dbReference type="GlyGen" id="Q56Y01">
    <property type="glycosylation" value="1 site"/>
</dbReference>
<dbReference type="PaxDb" id="3702-AT2G29525.1"/>
<dbReference type="ProteomicsDB" id="228824">
    <molecule id="Q56Y01-1"/>
</dbReference>
<dbReference type="EnsemblPlants" id="AT2G29525.1">
    <molecule id="Q56Y01-1"/>
    <property type="protein sequence ID" value="AT2G29525.1"/>
    <property type="gene ID" value="AT2G29525"/>
</dbReference>
<dbReference type="EnsemblPlants" id="AT2G29525.2">
    <molecule id="Q56Y01-2"/>
    <property type="protein sequence ID" value="AT2G29525.2"/>
    <property type="gene ID" value="AT2G29525"/>
</dbReference>
<dbReference type="EnsemblPlants" id="AT2G29525.3">
    <molecule id="Q56Y01-1"/>
    <property type="protein sequence ID" value="AT2G29525.3"/>
    <property type="gene ID" value="AT2G29525"/>
</dbReference>
<dbReference type="EnsemblPlants" id="AT2G29525.4">
    <molecule id="Q56Y01-1"/>
    <property type="protein sequence ID" value="AT2G29525.4"/>
    <property type="gene ID" value="AT2G29525"/>
</dbReference>
<dbReference type="Gramene" id="AT2G29525.1">
    <molecule id="Q56Y01-1"/>
    <property type="protein sequence ID" value="AT2G29525.1"/>
    <property type="gene ID" value="AT2G29525"/>
</dbReference>
<dbReference type="Gramene" id="AT2G29525.2">
    <molecule id="Q56Y01-2"/>
    <property type="protein sequence ID" value="AT2G29525.2"/>
    <property type="gene ID" value="AT2G29525"/>
</dbReference>
<dbReference type="Gramene" id="AT2G29525.3">
    <molecule id="Q56Y01-1"/>
    <property type="protein sequence ID" value="AT2G29525.3"/>
    <property type="gene ID" value="AT2G29525"/>
</dbReference>
<dbReference type="Gramene" id="AT2G29525.4">
    <molecule id="Q56Y01-1"/>
    <property type="protein sequence ID" value="AT2G29525.4"/>
    <property type="gene ID" value="AT2G29525"/>
</dbReference>
<dbReference type="KEGG" id="ath:AT2G29525"/>
<dbReference type="Araport" id="AT2G29525"/>
<dbReference type="TAIR" id="AT2G29525">
    <property type="gene designation" value="ATIPCS3"/>
</dbReference>
<dbReference type="eggNOG" id="KOG3058">
    <property type="taxonomic scope" value="Eukaryota"/>
</dbReference>
<dbReference type="InParanoid" id="Q56Y01"/>
<dbReference type="OMA" id="NIRFIKM"/>
<dbReference type="PhylomeDB" id="Q56Y01"/>
<dbReference type="BRENDA" id="2.7.1.227">
    <property type="organism ID" value="399"/>
</dbReference>
<dbReference type="PRO" id="PR:Q56Y01"/>
<dbReference type="Proteomes" id="UP000006548">
    <property type="component" value="Chromosome 2"/>
</dbReference>
<dbReference type="ExpressionAtlas" id="Q56Y01">
    <property type="expression patterns" value="baseline and differential"/>
</dbReference>
<dbReference type="GO" id="GO:0016020">
    <property type="term" value="C:membrane"/>
    <property type="evidence" value="ECO:0007669"/>
    <property type="project" value="UniProtKB-SubCell"/>
</dbReference>
<dbReference type="GO" id="GO:0045140">
    <property type="term" value="F:inositol phosphoceramide synthase activity"/>
    <property type="evidence" value="ECO:0000314"/>
    <property type="project" value="TAIR"/>
</dbReference>
<dbReference type="GO" id="GO:0016780">
    <property type="term" value="F:phosphotransferase activity, for other substituted phosphate groups"/>
    <property type="evidence" value="ECO:0007669"/>
    <property type="project" value="InterPro"/>
</dbReference>
<dbReference type="GO" id="GO:0030148">
    <property type="term" value="P:sphingolipid biosynthetic process"/>
    <property type="evidence" value="ECO:0000314"/>
    <property type="project" value="TAIR"/>
</dbReference>
<dbReference type="InterPro" id="IPR045221">
    <property type="entry name" value="Sphingomyelin_synth-like"/>
</dbReference>
<dbReference type="InterPro" id="IPR025749">
    <property type="entry name" value="Sphingomyelin_synth-like_dom"/>
</dbReference>
<dbReference type="PANTHER" id="PTHR21290:SF62">
    <property type="entry name" value="PHOSPHATIDYLINOSITOL:CERAMIDE INOSITOLPHOSPHOTRANSFERASE 1-RELATED"/>
    <property type="match status" value="1"/>
</dbReference>
<dbReference type="PANTHER" id="PTHR21290">
    <property type="entry name" value="SPHINGOMYELIN SYNTHETASE"/>
    <property type="match status" value="1"/>
</dbReference>
<dbReference type="Pfam" id="PF14360">
    <property type="entry name" value="PAP2_C"/>
    <property type="match status" value="1"/>
</dbReference>
<sequence length="289" mass="32981">MPVYVDREAPKLWRRIYSEATLEASLLAEKWKLVLAGLVFQYIHGLAAHGVHYLHRPGPTLQDAGFFILPALGQDKAFFSETVFVTIFGSFILWTFHPFVSHSKKICTVLIWCRVFVYLAASQSLRIITFFATQLPGPNYHCREGSKLAKIPPPKNVLEVLLINFPDGVIYGCGDLIFSSHTIFTLVFVRTYQRYGTRRWIKHLAWLMAVIQSILIIASRKHYTVDIVVAWYTVNLVMFYVDSKLPEMAERSSGPSPTPLLPLSTKDSKNKSKEDHQRLLNENNVADDH</sequence>
<organism>
    <name type="scientific">Arabidopsis thaliana</name>
    <name type="common">Mouse-ear cress</name>
    <dbReference type="NCBI Taxonomy" id="3702"/>
    <lineage>
        <taxon>Eukaryota</taxon>
        <taxon>Viridiplantae</taxon>
        <taxon>Streptophyta</taxon>
        <taxon>Embryophyta</taxon>
        <taxon>Tracheophyta</taxon>
        <taxon>Spermatophyta</taxon>
        <taxon>Magnoliopsida</taxon>
        <taxon>eudicotyledons</taxon>
        <taxon>Gunneridae</taxon>
        <taxon>Pentapetalae</taxon>
        <taxon>rosids</taxon>
        <taxon>malvids</taxon>
        <taxon>Brassicales</taxon>
        <taxon>Brassicaceae</taxon>
        <taxon>Camelineae</taxon>
        <taxon>Arabidopsis</taxon>
    </lineage>
</organism>
<comment type="function">
    <text evidence="4">Catalyzes the transfer of the phosphorylinositol group from phosphatidylinositol (PI) to phytoceramide, an essential step in sphingolipid biosynthesis.</text>
</comment>
<comment type="subcellular location">
    <subcellularLocation>
        <location evidence="7">Membrane</location>
        <topology evidence="7">Multi-pass membrane protein</topology>
    </subcellularLocation>
</comment>
<comment type="alternative products">
    <event type="alternative splicing"/>
    <isoform>
        <id>Q56Y01-1</id>
        <name>1</name>
        <sequence type="displayed"/>
    </isoform>
    <isoform>
        <id>Q56Y01-2</id>
        <name>2</name>
        <sequence type="described" ref="VSP_044382 VSP_044383"/>
    </isoform>
    <isoform>
        <id>Q56Y01-3</id>
        <name>3</name>
        <sequence type="described" ref="VSP_044380 VSP_044381"/>
    </isoform>
</comment>
<comment type="tissue specificity">
    <text evidence="4">Mostly expressed in stems and flowers, and, to a lower extent, in leaves, roots and siliques.</text>
</comment>
<comment type="similarity">
    <text evidence="7">Belongs to the sphingomyelin synthase family.</text>
</comment>
<comment type="sequence caution" evidence="7">
    <conflict type="frameshift">
        <sequence resource="EMBL" id="BX820662"/>
    </conflict>
</comment>
<gene>
    <name type="primary">IPCS3</name>
    <name type="synonym">ERHL1</name>
    <name type="ordered locus">At2g29525</name>
    <name type="ORF">F16P2.49</name>
</gene>
<name>IPCS3_ARATH</name>
<keyword id="KW-0025">Alternative splicing</keyword>
<keyword id="KW-0444">Lipid biosynthesis</keyword>
<keyword id="KW-0443">Lipid metabolism</keyword>
<keyword id="KW-0472">Membrane</keyword>
<keyword id="KW-1185">Reference proteome</keyword>
<keyword id="KW-0746">Sphingolipid metabolism</keyword>
<keyword id="KW-0808">Transferase</keyword>
<keyword id="KW-0812">Transmembrane</keyword>
<keyword id="KW-1133">Transmembrane helix</keyword>
<feature type="chain" id="PRO_0000419957" description="Phosphatidylinositol:ceramide inositolphosphotransferase 3">
    <location>
        <begin position="1"/>
        <end position="289"/>
    </location>
</feature>
<feature type="transmembrane region" description="Helical" evidence="2">
    <location>
        <begin position="33"/>
        <end position="53"/>
    </location>
</feature>
<feature type="transmembrane region" description="Helical" evidence="2">
    <location>
        <begin position="77"/>
        <end position="97"/>
    </location>
</feature>
<feature type="transmembrane region" description="Helical" evidence="2">
    <location>
        <begin position="115"/>
        <end position="135"/>
    </location>
</feature>
<feature type="transmembrane region" description="Helical" evidence="2">
    <location>
        <begin position="169"/>
        <end position="189"/>
    </location>
</feature>
<feature type="transmembrane region" description="Helical" evidence="2">
    <location>
        <begin position="199"/>
        <end position="219"/>
    </location>
</feature>
<feature type="transmembrane region" description="Helical" evidence="2">
    <location>
        <begin position="223"/>
        <end position="243"/>
    </location>
</feature>
<feature type="region of interest" description="Disordered" evidence="3">
    <location>
        <begin position="249"/>
        <end position="289"/>
    </location>
</feature>
<feature type="compositionally biased region" description="Basic and acidic residues" evidence="3">
    <location>
        <begin position="266"/>
        <end position="279"/>
    </location>
</feature>
<feature type="compositionally biased region" description="Polar residues" evidence="3">
    <location>
        <begin position="280"/>
        <end position="289"/>
    </location>
</feature>
<feature type="active site" evidence="1">
    <location>
        <position position="181"/>
    </location>
</feature>
<feature type="active site" evidence="1">
    <location>
        <position position="222"/>
    </location>
</feature>
<feature type="active site" evidence="1">
    <location>
        <position position="226"/>
    </location>
</feature>
<feature type="splice variant" id="VSP_044380" description="In isoform 3." evidence="5">
    <original>VLLINFPDGVI</original>
    <variation>FLMELYMVVEI</variation>
    <location>
        <begin position="160"/>
        <end position="170"/>
    </location>
</feature>
<feature type="splice variant" id="VSP_044381" description="In isoform 3." evidence="5">
    <location>
        <begin position="171"/>
        <end position="289"/>
    </location>
</feature>
<feature type="splice variant" id="VSP_044382" description="In isoform 2." evidence="6">
    <original>EMAER</original>
    <variation>GKLAQ</variation>
    <location>
        <begin position="247"/>
        <end position="251"/>
    </location>
</feature>
<feature type="splice variant" id="VSP_044383" description="In isoform 2." evidence="6">
    <location>
        <begin position="252"/>
        <end position="289"/>
    </location>
</feature>
<protein>
    <recommendedName>
        <fullName>Phosphatidylinositol:ceramide inositolphosphotransferase 3</fullName>
        <ecNumber>2.7.8.-</ecNumber>
    </recommendedName>
    <alternativeName>
        <fullName>Inositol-phosphorylceramide synthase 3</fullName>
        <shortName>AtIPCS3</shortName>
        <shortName>IPC synthase 3</shortName>
    </alternativeName>
    <alternativeName>
        <fullName>Protein ERH1-like1</fullName>
    </alternativeName>
    <alternativeName>
        <fullName>Sphingolipid synthase 3</fullName>
    </alternativeName>
</protein>